<protein>
    <recommendedName>
        <fullName evidence="1">LexA repressor</fullName>
        <ecNumber evidence="1">3.4.21.88</ecNumber>
    </recommendedName>
</protein>
<proteinExistence type="inferred from homology"/>
<dbReference type="EC" id="3.4.21.88" evidence="1"/>
<dbReference type="EMBL" id="CU207211">
    <property type="protein sequence ID" value="CAL62300.1"/>
    <property type="molecule type" value="Genomic_DNA"/>
</dbReference>
<dbReference type="SMR" id="A4G713"/>
<dbReference type="STRING" id="204773.HEAR2163"/>
<dbReference type="MEROPS" id="S24.001"/>
<dbReference type="KEGG" id="har:HEAR2163"/>
<dbReference type="eggNOG" id="COG1974">
    <property type="taxonomic scope" value="Bacteria"/>
</dbReference>
<dbReference type="HOGENOM" id="CLU_066192_45_3_4"/>
<dbReference type="OrthoDB" id="9802364at2"/>
<dbReference type="Proteomes" id="UP000006697">
    <property type="component" value="Chromosome"/>
</dbReference>
<dbReference type="GO" id="GO:0003677">
    <property type="term" value="F:DNA binding"/>
    <property type="evidence" value="ECO:0007669"/>
    <property type="project" value="UniProtKB-UniRule"/>
</dbReference>
<dbReference type="GO" id="GO:0004252">
    <property type="term" value="F:serine-type endopeptidase activity"/>
    <property type="evidence" value="ECO:0007669"/>
    <property type="project" value="UniProtKB-UniRule"/>
</dbReference>
<dbReference type="GO" id="GO:0006281">
    <property type="term" value="P:DNA repair"/>
    <property type="evidence" value="ECO:0007669"/>
    <property type="project" value="UniProtKB-UniRule"/>
</dbReference>
<dbReference type="GO" id="GO:0006260">
    <property type="term" value="P:DNA replication"/>
    <property type="evidence" value="ECO:0007669"/>
    <property type="project" value="UniProtKB-UniRule"/>
</dbReference>
<dbReference type="GO" id="GO:0045892">
    <property type="term" value="P:negative regulation of DNA-templated transcription"/>
    <property type="evidence" value="ECO:0007669"/>
    <property type="project" value="UniProtKB-UniRule"/>
</dbReference>
<dbReference type="GO" id="GO:0006508">
    <property type="term" value="P:proteolysis"/>
    <property type="evidence" value="ECO:0007669"/>
    <property type="project" value="InterPro"/>
</dbReference>
<dbReference type="GO" id="GO:0009432">
    <property type="term" value="P:SOS response"/>
    <property type="evidence" value="ECO:0007669"/>
    <property type="project" value="UniProtKB-UniRule"/>
</dbReference>
<dbReference type="CDD" id="cd06529">
    <property type="entry name" value="S24_LexA-like"/>
    <property type="match status" value="1"/>
</dbReference>
<dbReference type="FunFam" id="1.10.10.10:FF:000009">
    <property type="entry name" value="LexA repressor"/>
    <property type="match status" value="1"/>
</dbReference>
<dbReference type="FunFam" id="2.10.109.10:FF:000001">
    <property type="entry name" value="LexA repressor"/>
    <property type="match status" value="1"/>
</dbReference>
<dbReference type="Gene3D" id="2.10.109.10">
    <property type="entry name" value="Umud Fragment, subunit A"/>
    <property type="match status" value="1"/>
</dbReference>
<dbReference type="Gene3D" id="1.10.10.10">
    <property type="entry name" value="Winged helix-like DNA-binding domain superfamily/Winged helix DNA-binding domain"/>
    <property type="match status" value="1"/>
</dbReference>
<dbReference type="HAMAP" id="MF_00015">
    <property type="entry name" value="LexA"/>
    <property type="match status" value="1"/>
</dbReference>
<dbReference type="InterPro" id="IPR006200">
    <property type="entry name" value="LexA"/>
</dbReference>
<dbReference type="InterPro" id="IPR039418">
    <property type="entry name" value="LexA-like"/>
</dbReference>
<dbReference type="InterPro" id="IPR036286">
    <property type="entry name" value="LexA/Signal_pep-like_sf"/>
</dbReference>
<dbReference type="InterPro" id="IPR006199">
    <property type="entry name" value="LexA_DNA-bd_dom"/>
</dbReference>
<dbReference type="InterPro" id="IPR050077">
    <property type="entry name" value="LexA_repressor"/>
</dbReference>
<dbReference type="InterPro" id="IPR006197">
    <property type="entry name" value="Peptidase_S24_LexA"/>
</dbReference>
<dbReference type="InterPro" id="IPR015927">
    <property type="entry name" value="Peptidase_S24_S26A/B/C"/>
</dbReference>
<dbReference type="InterPro" id="IPR036388">
    <property type="entry name" value="WH-like_DNA-bd_sf"/>
</dbReference>
<dbReference type="InterPro" id="IPR036390">
    <property type="entry name" value="WH_DNA-bd_sf"/>
</dbReference>
<dbReference type="NCBIfam" id="TIGR00498">
    <property type="entry name" value="lexA"/>
    <property type="match status" value="1"/>
</dbReference>
<dbReference type="PANTHER" id="PTHR33516">
    <property type="entry name" value="LEXA REPRESSOR"/>
    <property type="match status" value="1"/>
</dbReference>
<dbReference type="PANTHER" id="PTHR33516:SF2">
    <property type="entry name" value="LEXA REPRESSOR-RELATED"/>
    <property type="match status" value="1"/>
</dbReference>
<dbReference type="Pfam" id="PF01726">
    <property type="entry name" value="LexA_DNA_bind"/>
    <property type="match status" value="1"/>
</dbReference>
<dbReference type="Pfam" id="PF00717">
    <property type="entry name" value="Peptidase_S24"/>
    <property type="match status" value="1"/>
</dbReference>
<dbReference type="PRINTS" id="PR00726">
    <property type="entry name" value="LEXASERPTASE"/>
</dbReference>
<dbReference type="SUPFAM" id="SSF51306">
    <property type="entry name" value="LexA/Signal peptidase"/>
    <property type="match status" value="1"/>
</dbReference>
<dbReference type="SUPFAM" id="SSF46785">
    <property type="entry name" value="Winged helix' DNA-binding domain"/>
    <property type="match status" value="1"/>
</dbReference>
<keyword id="KW-0068">Autocatalytic cleavage</keyword>
<keyword id="KW-0227">DNA damage</keyword>
<keyword id="KW-0234">DNA repair</keyword>
<keyword id="KW-0235">DNA replication</keyword>
<keyword id="KW-0238">DNA-binding</keyword>
<keyword id="KW-0378">Hydrolase</keyword>
<keyword id="KW-1185">Reference proteome</keyword>
<keyword id="KW-0678">Repressor</keyword>
<keyword id="KW-0742">SOS response</keyword>
<keyword id="KW-0804">Transcription</keyword>
<keyword id="KW-0805">Transcription regulation</keyword>
<reference key="1">
    <citation type="journal article" date="2007" name="PLoS Genet.">
        <title>A tale of two oxidation states: bacterial colonization of arsenic-rich environments.</title>
        <authorList>
            <person name="Muller D."/>
            <person name="Medigue C."/>
            <person name="Koechler S."/>
            <person name="Barbe V."/>
            <person name="Barakat M."/>
            <person name="Talla E."/>
            <person name="Bonnefoy V."/>
            <person name="Krin E."/>
            <person name="Arsene-Ploetze F."/>
            <person name="Carapito C."/>
            <person name="Chandler M."/>
            <person name="Cournoyer B."/>
            <person name="Cruveiller S."/>
            <person name="Dossat C."/>
            <person name="Duval S."/>
            <person name="Heymann M."/>
            <person name="Leize E."/>
            <person name="Lieutaud A."/>
            <person name="Lievremont D."/>
            <person name="Makita Y."/>
            <person name="Mangenot S."/>
            <person name="Nitschke W."/>
            <person name="Ortet P."/>
            <person name="Perdrial N."/>
            <person name="Schoepp B."/>
            <person name="Siguier P."/>
            <person name="Simeonova D.D."/>
            <person name="Rouy Z."/>
            <person name="Segurens B."/>
            <person name="Turlin E."/>
            <person name="Vallenet D."/>
            <person name="van Dorsselaer A."/>
            <person name="Weiss S."/>
            <person name="Weissenbach J."/>
            <person name="Lett M.-C."/>
            <person name="Danchin A."/>
            <person name="Bertin P.N."/>
        </authorList>
    </citation>
    <scope>NUCLEOTIDE SEQUENCE [LARGE SCALE GENOMIC DNA]</scope>
    <source>
        <strain>ULPAs1</strain>
    </source>
</reference>
<feature type="chain" id="PRO_0000322734" description="LexA repressor">
    <location>
        <begin position="1"/>
        <end position="219"/>
    </location>
</feature>
<feature type="DNA-binding region" description="H-T-H motif" evidence="1">
    <location>
        <begin position="28"/>
        <end position="48"/>
    </location>
</feature>
<feature type="active site" description="For autocatalytic cleavage activity" evidence="1">
    <location>
        <position position="138"/>
    </location>
</feature>
<feature type="active site" description="For autocatalytic cleavage activity" evidence="1">
    <location>
        <position position="175"/>
    </location>
</feature>
<feature type="site" description="Cleavage; by autolysis" evidence="1">
    <location>
        <begin position="103"/>
        <end position="104"/>
    </location>
</feature>
<gene>
    <name evidence="1" type="primary">lexA</name>
    <name type="ordered locus">HEAR2163</name>
</gene>
<name>LEXA_HERAR</name>
<organism>
    <name type="scientific">Herminiimonas arsenicoxydans</name>
    <dbReference type="NCBI Taxonomy" id="204773"/>
    <lineage>
        <taxon>Bacteria</taxon>
        <taxon>Pseudomonadati</taxon>
        <taxon>Pseudomonadota</taxon>
        <taxon>Betaproteobacteria</taxon>
        <taxon>Burkholderiales</taxon>
        <taxon>Oxalobacteraceae</taxon>
        <taxon>Herminiimonas</taxon>
    </lineage>
</organism>
<sequence length="219" mass="23869">MIKLTARQEQILNLIRDAIENTGFPPTRAEIAAELGFRSANAAEEHLQALARKGAIEISPGTSRGIRLRDMGGTRSDRSGAQLSLPHPALMQLNLPLVGRVAAGSPILAQEHIEATYNVDKSLFSAKPDFLLKVRGMSMRDAGILDGDLLAVKKIDSAKNGQIVVARLGDDVTVKRYKKTGSLIELLPENPDFQPIRVDLEHDDFALEGLAVGLMRTWN</sequence>
<comment type="function">
    <text evidence="1">Represses a number of genes involved in the response to DNA damage (SOS response), including recA and lexA. In the presence of single-stranded DNA, RecA interacts with LexA causing an autocatalytic cleavage which disrupts the DNA-binding part of LexA, leading to derepression of the SOS regulon and eventually DNA repair.</text>
</comment>
<comment type="catalytic activity">
    <reaction evidence="1">
        <text>Hydrolysis of Ala-|-Gly bond in repressor LexA.</text>
        <dbReference type="EC" id="3.4.21.88"/>
    </reaction>
</comment>
<comment type="subunit">
    <text evidence="1">Homodimer.</text>
</comment>
<comment type="similarity">
    <text evidence="1">Belongs to the peptidase S24 family.</text>
</comment>
<accession>A4G713</accession>
<evidence type="ECO:0000255" key="1">
    <source>
        <dbReference type="HAMAP-Rule" id="MF_00015"/>
    </source>
</evidence>